<feature type="chain" id="PRO_0000257505" description="Putative pre-16S rRNA nuclease">
    <location>
        <begin position="1"/>
        <end position="144"/>
    </location>
</feature>
<proteinExistence type="inferred from homology"/>
<organism>
    <name type="scientific">Blochmanniella pennsylvanica (strain BPEN)</name>
    <dbReference type="NCBI Taxonomy" id="291272"/>
    <lineage>
        <taxon>Bacteria</taxon>
        <taxon>Pseudomonadati</taxon>
        <taxon>Pseudomonadota</taxon>
        <taxon>Gammaproteobacteria</taxon>
        <taxon>Enterobacterales</taxon>
        <taxon>Enterobacteriaceae</taxon>
        <taxon>ant endosymbionts</taxon>
        <taxon>Candidatus Blochmanniella</taxon>
    </lineage>
</organism>
<keyword id="KW-0963">Cytoplasm</keyword>
<keyword id="KW-0378">Hydrolase</keyword>
<keyword id="KW-0540">Nuclease</keyword>
<keyword id="KW-1185">Reference proteome</keyword>
<keyword id="KW-0690">Ribosome biogenesis</keyword>
<gene>
    <name evidence="1" type="primary">yqgF</name>
    <name type="ordered locus">BPEN_257</name>
</gene>
<comment type="function">
    <text evidence="1">Could be a nuclease involved in processing of the 5'-end of pre-16S rRNA.</text>
</comment>
<comment type="subcellular location">
    <subcellularLocation>
        <location evidence="1">Cytoplasm</location>
    </subcellularLocation>
</comment>
<comment type="similarity">
    <text evidence="1">Belongs to the YqgF nuclease family.</text>
</comment>
<sequence length="144" mass="16253">MRDVNCVGIVMGFDFGTKHIGVAIGQKLTCTAQPLTVLQSQSGVPNWKRIRDIYNTWKPMIFVVGLPLKIDGSEQPITILAKIFAIQLKELFPVPVKMHDERFSTSEARLNYFKYYHDDLCARSNIKINAIAAGVILKSWLNKS</sequence>
<dbReference type="EC" id="3.1.-.-" evidence="1"/>
<dbReference type="EMBL" id="CP000016">
    <property type="protein sequence ID" value="AAZ40888.1"/>
    <property type="molecule type" value="Genomic_DNA"/>
</dbReference>
<dbReference type="RefSeq" id="WP_011282795.1">
    <property type="nucleotide sequence ID" value="NC_007292.1"/>
</dbReference>
<dbReference type="SMR" id="Q493F4"/>
<dbReference type="STRING" id="291272.BPEN_257"/>
<dbReference type="KEGG" id="bpn:BPEN_257"/>
<dbReference type="eggNOG" id="COG0816">
    <property type="taxonomic scope" value="Bacteria"/>
</dbReference>
<dbReference type="HOGENOM" id="CLU_098240_3_0_6"/>
<dbReference type="OrthoDB" id="9796140at2"/>
<dbReference type="Proteomes" id="UP000007794">
    <property type="component" value="Chromosome"/>
</dbReference>
<dbReference type="GO" id="GO:0005829">
    <property type="term" value="C:cytosol"/>
    <property type="evidence" value="ECO:0007669"/>
    <property type="project" value="TreeGrafter"/>
</dbReference>
<dbReference type="GO" id="GO:0004518">
    <property type="term" value="F:nuclease activity"/>
    <property type="evidence" value="ECO:0007669"/>
    <property type="project" value="UniProtKB-KW"/>
</dbReference>
<dbReference type="GO" id="GO:0000967">
    <property type="term" value="P:rRNA 5'-end processing"/>
    <property type="evidence" value="ECO:0007669"/>
    <property type="project" value="UniProtKB-UniRule"/>
</dbReference>
<dbReference type="CDD" id="cd16964">
    <property type="entry name" value="YqgF"/>
    <property type="match status" value="1"/>
</dbReference>
<dbReference type="Gene3D" id="3.30.420.140">
    <property type="entry name" value="YqgF/RNase H-like domain"/>
    <property type="match status" value="1"/>
</dbReference>
<dbReference type="HAMAP" id="MF_00651">
    <property type="entry name" value="Nuclease_YqgF"/>
    <property type="match status" value="1"/>
</dbReference>
<dbReference type="InterPro" id="IPR012337">
    <property type="entry name" value="RNaseH-like_sf"/>
</dbReference>
<dbReference type="InterPro" id="IPR005227">
    <property type="entry name" value="YqgF"/>
</dbReference>
<dbReference type="InterPro" id="IPR006641">
    <property type="entry name" value="YqgF/RNaseH-like_dom"/>
</dbReference>
<dbReference type="InterPro" id="IPR037027">
    <property type="entry name" value="YqgF/RNaseH-like_dom_sf"/>
</dbReference>
<dbReference type="NCBIfam" id="TIGR00250">
    <property type="entry name" value="RNAse_H_YqgF"/>
    <property type="match status" value="1"/>
</dbReference>
<dbReference type="PANTHER" id="PTHR33317">
    <property type="entry name" value="POLYNUCLEOTIDYL TRANSFERASE, RIBONUCLEASE H-LIKE SUPERFAMILY PROTEIN"/>
    <property type="match status" value="1"/>
</dbReference>
<dbReference type="PANTHER" id="PTHR33317:SF4">
    <property type="entry name" value="POLYNUCLEOTIDYL TRANSFERASE, RIBONUCLEASE H-LIKE SUPERFAMILY PROTEIN"/>
    <property type="match status" value="1"/>
</dbReference>
<dbReference type="Pfam" id="PF03652">
    <property type="entry name" value="RuvX"/>
    <property type="match status" value="1"/>
</dbReference>
<dbReference type="SMART" id="SM00732">
    <property type="entry name" value="YqgFc"/>
    <property type="match status" value="1"/>
</dbReference>
<dbReference type="SUPFAM" id="SSF53098">
    <property type="entry name" value="Ribonuclease H-like"/>
    <property type="match status" value="1"/>
</dbReference>
<name>YQGF_BLOPB</name>
<protein>
    <recommendedName>
        <fullName evidence="1">Putative pre-16S rRNA nuclease</fullName>
        <ecNumber evidence="1">3.1.-.-</ecNumber>
    </recommendedName>
</protein>
<reference key="1">
    <citation type="journal article" date="2005" name="Genome Res.">
        <title>Genome sequence of Blochmannia pennsylvanicus indicates parallel evolutionary trends among bacterial mutualists of insects.</title>
        <authorList>
            <person name="Degnan P.H."/>
            <person name="Lazarus A.B."/>
            <person name="Wernegreen J.J."/>
        </authorList>
    </citation>
    <scope>NUCLEOTIDE SEQUENCE [LARGE SCALE GENOMIC DNA]</scope>
    <source>
        <strain>BPEN</strain>
    </source>
</reference>
<evidence type="ECO:0000255" key="1">
    <source>
        <dbReference type="HAMAP-Rule" id="MF_00651"/>
    </source>
</evidence>
<accession>Q493F4</accession>